<sequence length="273" mass="29728">MAIHLYKTSTPSTRNGAVDSQVKSNTRKNLIYGQPRCSKGRNARGIITAGHRGGGHKRLYRKIDFRRNERDIYGRIVSIEYDPNRNASICLIHYGDGEKRYILHPRGAIIGDTIVSGTEVPIKMGNALPLKMPLGTALHNIEITLGKGGQLARAAGAVAKLIAKEGKSATLKLPSGEVRLISNNCSATVGQVGNVGVNQKSLGRAGSKRWLGKRPVVRGVVMNPVDHPHGGGEGRAPIGRKKPATPWGYPALGRRSRKRNKYSENLILRRRSK</sequence>
<name>RK2_OENPA</name>
<organism>
    <name type="scientific">Oenothera parviflora</name>
    <name type="common">Small-flowered evening primrose</name>
    <name type="synonym">Oenothera cruciata</name>
    <dbReference type="NCBI Taxonomy" id="482429"/>
    <lineage>
        <taxon>Eukaryota</taxon>
        <taxon>Viridiplantae</taxon>
        <taxon>Streptophyta</taxon>
        <taxon>Embryophyta</taxon>
        <taxon>Tracheophyta</taxon>
        <taxon>Spermatophyta</taxon>
        <taxon>Magnoliopsida</taxon>
        <taxon>eudicotyledons</taxon>
        <taxon>Gunneridae</taxon>
        <taxon>Pentapetalae</taxon>
        <taxon>rosids</taxon>
        <taxon>malvids</taxon>
        <taxon>Myrtales</taxon>
        <taxon>Onagraceae</taxon>
        <taxon>Onagroideae</taxon>
        <taxon>Onagreae</taxon>
        <taxon>Oenothera</taxon>
    </lineage>
</organism>
<proteinExistence type="inferred from homology"/>
<keyword id="KW-0150">Chloroplast</keyword>
<keyword id="KW-0934">Plastid</keyword>
<keyword id="KW-0687">Ribonucleoprotein</keyword>
<keyword id="KW-0689">Ribosomal protein</keyword>
<protein>
    <recommendedName>
        <fullName evidence="2">Large ribosomal subunit protein uL2cz/uL2cy</fullName>
    </recommendedName>
    <alternativeName>
        <fullName evidence="4">50S ribosomal protein L2, chloroplastic</fullName>
    </alternativeName>
</protein>
<gene>
    <name type="primary">rpl2-A</name>
</gene>
<gene>
    <name type="primary">rpl2-B</name>
</gene>
<feature type="chain" id="PRO_0000342547" description="Large ribosomal subunit protein uL2cz/uL2cy">
    <location>
        <begin position="1"/>
        <end position="273"/>
    </location>
</feature>
<feature type="region of interest" description="Disordered" evidence="3">
    <location>
        <begin position="1"/>
        <end position="23"/>
    </location>
</feature>
<feature type="region of interest" description="Disordered" evidence="3">
    <location>
        <begin position="223"/>
        <end position="273"/>
    </location>
</feature>
<reference key="1">
    <citation type="journal article" date="2008" name="Nucleic Acids Res.">
        <title>The complete nucleotide sequences of the five genetically distinct plastid genomes of Oenothera, subsection Oenothera: I. Sequence evaluation and plastome evolution.</title>
        <authorList>
            <person name="Greiner S."/>
            <person name="Wang X."/>
            <person name="Rauwolf U."/>
            <person name="Silber M.V."/>
            <person name="Mayer K."/>
            <person name="Meurer J."/>
            <person name="Haberer G."/>
            <person name="Herrmann R.G."/>
        </authorList>
    </citation>
    <scope>NUCLEOTIDE SEQUENCE [LARGE SCALE GENOMIC DNA]</scope>
    <source>
        <strain>cv. Atrovirens</strain>
    </source>
</reference>
<comment type="subunit">
    <text evidence="1">Part of the 50S ribosomal subunit.</text>
</comment>
<comment type="subcellular location">
    <subcellularLocation>
        <location>Plastid</location>
        <location>Chloroplast</location>
    </subcellularLocation>
</comment>
<comment type="similarity">
    <text evidence="4">Belongs to the universal ribosomal protein uL2 family.</text>
</comment>
<accession>B0Z5G9</accession>
<geneLocation type="chloroplast"/>
<evidence type="ECO:0000250" key="1"/>
<evidence type="ECO:0000255" key="2">
    <source>
        <dbReference type="HAMAP-Rule" id="MF_01320"/>
    </source>
</evidence>
<evidence type="ECO:0000256" key="3">
    <source>
        <dbReference type="SAM" id="MobiDB-lite"/>
    </source>
</evidence>
<evidence type="ECO:0000305" key="4"/>
<dbReference type="EMBL" id="EU262891">
    <property type="protein sequence ID" value="ABX10162.1"/>
    <property type="molecule type" value="Genomic_DNA"/>
</dbReference>
<dbReference type="EMBL" id="EU262891">
    <property type="protein sequence ID" value="ABX10183.1"/>
    <property type="molecule type" value="Genomic_DNA"/>
</dbReference>
<dbReference type="SMR" id="B0Z5G9"/>
<dbReference type="GO" id="GO:0009507">
    <property type="term" value="C:chloroplast"/>
    <property type="evidence" value="ECO:0007669"/>
    <property type="project" value="UniProtKB-SubCell"/>
</dbReference>
<dbReference type="GO" id="GO:0005762">
    <property type="term" value="C:mitochondrial large ribosomal subunit"/>
    <property type="evidence" value="ECO:0007669"/>
    <property type="project" value="TreeGrafter"/>
</dbReference>
<dbReference type="GO" id="GO:0019843">
    <property type="term" value="F:rRNA binding"/>
    <property type="evidence" value="ECO:0007669"/>
    <property type="project" value="UniProtKB-UniRule"/>
</dbReference>
<dbReference type="GO" id="GO:0003735">
    <property type="term" value="F:structural constituent of ribosome"/>
    <property type="evidence" value="ECO:0007669"/>
    <property type="project" value="InterPro"/>
</dbReference>
<dbReference type="GO" id="GO:0016740">
    <property type="term" value="F:transferase activity"/>
    <property type="evidence" value="ECO:0007669"/>
    <property type="project" value="InterPro"/>
</dbReference>
<dbReference type="GO" id="GO:0032543">
    <property type="term" value="P:mitochondrial translation"/>
    <property type="evidence" value="ECO:0007669"/>
    <property type="project" value="TreeGrafter"/>
</dbReference>
<dbReference type="FunFam" id="4.10.950.10:FF:000001">
    <property type="entry name" value="50S ribosomal protein L2"/>
    <property type="match status" value="1"/>
</dbReference>
<dbReference type="FunFam" id="2.30.30.30:FF:000008">
    <property type="entry name" value="50S ribosomal protein L2, chloroplastic"/>
    <property type="match status" value="1"/>
</dbReference>
<dbReference type="FunFam" id="2.40.50.140:FF:000029">
    <property type="entry name" value="50S ribosomal protein L2, chloroplastic"/>
    <property type="match status" value="1"/>
</dbReference>
<dbReference type="Gene3D" id="2.30.30.30">
    <property type="match status" value="1"/>
</dbReference>
<dbReference type="Gene3D" id="2.40.50.140">
    <property type="entry name" value="Nucleic acid-binding proteins"/>
    <property type="match status" value="1"/>
</dbReference>
<dbReference type="Gene3D" id="4.10.950.10">
    <property type="entry name" value="Ribosomal protein L2, domain 3"/>
    <property type="match status" value="1"/>
</dbReference>
<dbReference type="HAMAP" id="MF_01320_B">
    <property type="entry name" value="Ribosomal_uL2_B"/>
    <property type="match status" value="1"/>
</dbReference>
<dbReference type="InterPro" id="IPR012340">
    <property type="entry name" value="NA-bd_OB-fold"/>
</dbReference>
<dbReference type="InterPro" id="IPR014722">
    <property type="entry name" value="Rib_uL2_dom2"/>
</dbReference>
<dbReference type="InterPro" id="IPR002171">
    <property type="entry name" value="Ribosomal_uL2"/>
</dbReference>
<dbReference type="InterPro" id="IPR005880">
    <property type="entry name" value="Ribosomal_uL2_bac/org-type"/>
</dbReference>
<dbReference type="InterPro" id="IPR022669">
    <property type="entry name" value="Ribosomal_uL2_C"/>
</dbReference>
<dbReference type="InterPro" id="IPR022671">
    <property type="entry name" value="Ribosomal_uL2_CS"/>
</dbReference>
<dbReference type="InterPro" id="IPR014726">
    <property type="entry name" value="Ribosomal_uL2_dom3"/>
</dbReference>
<dbReference type="InterPro" id="IPR022666">
    <property type="entry name" value="Ribosomal_uL2_RNA-bd_dom"/>
</dbReference>
<dbReference type="InterPro" id="IPR008991">
    <property type="entry name" value="Translation_prot_SH3-like_sf"/>
</dbReference>
<dbReference type="NCBIfam" id="TIGR01171">
    <property type="entry name" value="rplB_bact"/>
    <property type="match status" value="1"/>
</dbReference>
<dbReference type="PANTHER" id="PTHR13691:SF5">
    <property type="entry name" value="LARGE RIBOSOMAL SUBUNIT PROTEIN UL2M"/>
    <property type="match status" value="1"/>
</dbReference>
<dbReference type="PANTHER" id="PTHR13691">
    <property type="entry name" value="RIBOSOMAL PROTEIN L2"/>
    <property type="match status" value="1"/>
</dbReference>
<dbReference type="Pfam" id="PF00181">
    <property type="entry name" value="Ribosomal_L2"/>
    <property type="match status" value="1"/>
</dbReference>
<dbReference type="Pfam" id="PF03947">
    <property type="entry name" value="Ribosomal_L2_C"/>
    <property type="match status" value="1"/>
</dbReference>
<dbReference type="PIRSF" id="PIRSF002158">
    <property type="entry name" value="Ribosomal_L2"/>
    <property type="match status" value="1"/>
</dbReference>
<dbReference type="SMART" id="SM01383">
    <property type="entry name" value="Ribosomal_L2"/>
    <property type="match status" value="1"/>
</dbReference>
<dbReference type="SMART" id="SM01382">
    <property type="entry name" value="Ribosomal_L2_C"/>
    <property type="match status" value="1"/>
</dbReference>
<dbReference type="SUPFAM" id="SSF50249">
    <property type="entry name" value="Nucleic acid-binding proteins"/>
    <property type="match status" value="1"/>
</dbReference>
<dbReference type="SUPFAM" id="SSF50104">
    <property type="entry name" value="Translation proteins SH3-like domain"/>
    <property type="match status" value="1"/>
</dbReference>
<dbReference type="PROSITE" id="PS00467">
    <property type="entry name" value="RIBOSOMAL_L2"/>
    <property type="match status" value="1"/>
</dbReference>